<protein>
    <recommendedName>
        <fullName evidence="3">Conotoxin Ac4.2</fullName>
    </recommendedName>
    <alternativeName>
        <fullName evidence="3">KappaA-conotoxin</fullName>
    </alternativeName>
</protein>
<organism>
    <name type="scientific">Conus achatinus</name>
    <name type="common">Little frog cone</name>
    <dbReference type="NCBI Taxonomy" id="369967"/>
    <lineage>
        <taxon>Eukaryota</taxon>
        <taxon>Metazoa</taxon>
        <taxon>Spiralia</taxon>
        <taxon>Lophotrochozoa</taxon>
        <taxon>Mollusca</taxon>
        <taxon>Gastropoda</taxon>
        <taxon>Caenogastropoda</taxon>
        <taxon>Neogastropoda</taxon>
        <taxon>Conoidea</taxon>
        <taxon>Conidae</taxon>
        <taxon>Conus</taxon>
        <taxon>Pionoconus</taxon>
    </lineage>
</organism>
<evidence type="ECO:0000250" key="1"/>
<evidence type="ECO:0000250" key="2">
    <source>
        <dbReference type="UniProtKB" id="P0DQY7"/>
    </source>
</evidence>
<evidence type="ECO:0000303" key="3">
    <source>
    </source>
</evidence>
<evidence type="ECO:0000305" key="4"/>
<feature type="propeptide" id="PRO_0000370642" evidence="1">
    <location>
        <begin position="1" status="less than"/>
        <end position="11"/>
    </location>
</feature>
<feature type="peptide" id="PRO_0000370643" description="Conotoxin Ac4.2" evidence="2">
    <location>
        <begin position="12"/>
        <end position="40"/>
    </location>
</feature>
<feature type="modified residue" description="4-hydroxyproline" evidence="2">
    <location>
        <position position="13"/>
    </location>
</feature>
<feature type="modified residue" description="4-hydroxyproline" evidence="2">
    <location>
        <position position="29"/>
    </location>
</feature>
<feature type="modified residue" description="4-hydroxyproline" evidence="2">
    <location>
        <position position="33"/>
    </location>
</feature>
<feature type="modified residue" description="Cysteine amide" evidence="2">
    <location>
        <position position="40"/>
    </location>
</feature>
<feature type="glycosylation site" description="O-linked (HexNAc...) threonine" evidence="2">
    <location>
        <position position="18"/>
    </location>
</feature>
<feature type="glycosylation site" description="O-linked (HexNAc...) threonine" evidence="2">
    <location>
        <position position="20"/>
    </location>
</feature>
<feature type="non-terminal residue">
    <location>
        <position position="1"/>
    </location>
</feature>
<keyword id="KW-0027">Amidation</keyword>
<keyword id="KW-1015">Disulfide bond</keyword>
<keyword id="KW-0325">Glycoprotein</keyword>
<keyword id="KW-0379">Hydroxylation</keyword>
<keyword id="KW-0872">Ion channel impairing toxin</keyword>
<keyword id="KW-0528">Neurotoxin</keyword>
<keyword id="KW-0964">Secreted</keyword>
<keyword id="KW-0800">Toxin</keyword>
<proteinExistence type="inferred from homology"/>
<accession>A3DT44</accession>
<sequence>FDGRNAAVNERAPWMVVTATTNCCGYTGPACHPCLCTQSCG</sequence>
<reference key="1">
    <citation type="journal article" date="2007" name="Toxicon">
        <title>From the identification of gene organization of alpha conotoxins to the cloning of novel toxins.</title>
        <authorList>
            <person name="Yuan D.-D."/>
            <person name="Han Y.-H."/>
            <person name="Wang C.-G."/>
            <person name="Chi C.-W."/>
        </authorList>
    </citation>
    <scope>NUCLEOTIDE SEQUENCE [GENOMIC DNA]</scope>
</reference>
<name>CA42_CONAH</name>
<comment type="function">
    <text evidence="4">Probable neurotoxin with ion channel inhibitor activity.</text>
</comment>
<comment type="subcellular location">
    <subcellularLocation>
        <location evidence="4">Secreted</location>
    </subcellularLocation>
</comment>
<comment type="tissue specificity">
    <text evidence="4">Expressed by the venom duct.</text>
</comment>
<comment type="domain">
    <text evidence="4">The cysteine framework is IV (CC-C-C-C-C).</text>
</comment>
<comment type="PTM">
    <text evidence="2">Contains 3 disulfide bonds.</text>
</comment>
<comment type="similarity">
    <text evidence="4">Belongs to the conotoxin A superfamily.</text>
</comment>
<dbReference type="EMBL" id="DQ311073">
    <property type="protein sequence ID" value="ABD33865.1"/>
    <property type="molecule type" value="Genomic_DNA"/>
</dbReference>
<dbReference type="SMR" id="A3DT44"/>
<dbReference type="TCDB" id="8.B.32.2.1">
    <property type="family name" value="the nicotinic acetylcholine receptor-targeting alpha-conotoxin (a-conotoxin) family"/>
</dbReference>
<dbReference type="ConoServer" id="563">
    <property type="toxin name" value="Ac4.2 precursor"/>
</dbReference>
<dbReference type="GO" id="GO:0005576">
    <property type="term" value="C:extracellular region"/>
    <property type="evidence" value="ECO:0007669"/>
    <property type="project" value="UniProtKB-SubCell"/>
</dbReference>
<dbReference type="GO" id="GO:0030550">
    <property type="term" value="F:acetylcholine receptor inhibitor activity"/>
    <property type="evidence" value="ECO:0007669"/>
    <property type="project" value="InterPro"/>
</dbReference>
<dbReference type="GO" id="GO:0099106">
    <property type="term" value="F:ion channel regulator activity"/>
    <property type="evidence" value="ECO:0007669"/>
    <property type="project" value="UniProtKB-KW"/>
</dbReference>
<dbReference type="GO" id="GO:0090729">
    <property type="term" value="F:toxin activity"/>
    <property type="evidence" value="ECO:0007669"/>
    <property type="project" value="UniProtKB-KW"/>
</dbReference>
<dbReference type="InterPro" id="IPR009958">
    <property type="entry name" value="Conotoxin_a-typ"/>
</dbReference>
<dbReference type="Pfam" id="PF07365">
    <property type="entry name" value="Toxin_8"/>
    <property type="match status" value="1"/>
</dbReference>